<comment type="function">
    <text evidence="1">Specifically methylates the N4 position of cytidine in position 1402 (C1402) of 16S rRNA.</text>
</comment>
<comment type="catalytic activity">
    <reaction evidence="1">
        <text>cytidine(1402) in 16S rRNA + S-adenosyl-L-methionine = N(4)-methylcytidine(1402) in 16S rRNA + S-adenosyl-L-homocysteine + H(+)</text>
        <dbReference type="Rhea" id="RHEA:42928"/>
        <dbReference type="Rhea" id="RHEA-COMP:10286"/>
        <dbReference type="Rhea" id="RHEA-COMP:10287"/>
        <dbReference type="ChEBI" id="CHEBI:15378"/>
        <dbReference type="ChEBI" id="CHEBI:57856"/>
        <dbReference type="ChEBI" id="CHEBI:59789"/>
        <dbReference type="ChEBI" id="CHEBI:74506"/>
        <dbReference type="ChEBI" id="CHEBI:82748"/>
        <dbReference type="EC" id="2.1.1.199"/>
    </reaction>
</comment>
<comment type="subcellular location">
    <subcellularLocation>
        <location evidence="1">Cytoplasm</location>
    </subcellularLocation>
</comment>
<comment type="similarity">
    <text evidence="1">Belongs to the methyltransferase superfamily. RsmH family.</text>
</comment>
<organism>
    <name type="scientific">Coxiella burnetii (strain Dugway 5J108-111)</name>
    <dbReference type="NCBI Taxonomy" id="434922"/>
    <lineage>
        <taxon>Bacteria</taxon>
        <taxon>Pseudomonadati</taxon>
        <taxon>Pseudomonadota</taxon>
        <taxon>Gammaproteobacteria</taxon>
        <taxon>Legionellales</taxon>
        <taxon>Coxiellaceae</taxon>
        <taxon>Coxiella</taxon>
    </lineage>
</organism>
<dbReference type="EC" id="2.1.1.199" evidence="1"/>
<dbReference type="EMBL" id="CP000733">
    <property type="protein sequence ID" value="ABS77678.1"/>
    <property type="molecule type" value="Genomic_DNA"/>
</dbReference>
<dbReference type="RefSeq" id="WP_011997362.1">
    <property type="nucleotide sequence ID" value="NC_009727.1"/>
</dbReference>
<dbReference type="SMR" id="A9KET2"/>
<dbReference type="KEGG" id="cbd:CBUD_1991"/>
<dbReference type="HOGENOM" id="CLU_038422_2_0_6"/>
<dbReference type="Proteomes" id="UP000008555">
    <property type="component" value="Chromosome"/>
</dbReference>
<dbReference type="GO" id="GO:0005737">
    <property type="term" value="C:cytoplasm"/>
    <property type="evidence" value="ECO:0007669"/>
    <property type="project" value="UniProtKB-SubCell"/>
</dbReference>
<dbReference type="GO" id="GO:0071424">
    <property type="term" value="F:rRNA (cytosine-N4-)-methyltransferase activity"/>
    <property type="evidence" value="ECO:0007669"/>
    <property type="project" value="UniProtKB-UniRule"/>
</dbReference>
<dbReference type="GO" id="GO:0070475">
    <property type="term" value="P:rRNA base methylation"/>
    <property type="evidence" value="ECO:0007669"/>
    <property type="project" value="UniProtKB-UniRule"/>
</dbReference>
<dbReference type="FunFam" id="1.10.150.170:FF:000001">
    <property type="entry name" value="Ribosomal RNA small subunit methyltransferase H"/>
    <property type="match status" value="1"/>
</dbReference>
<dbReference type="Gene3D" id="1.10.150.170">
    <property type="entry name" value="Putative methyltransferase TM0872, insert domain"/>
    <property type="match status" value="1"/>
</dbReference>
<dbReference type="Gene3D" id="3.40.50.150">
    <property type="entry name" value="Vaccinia Virus protein VP39"/>
    <property type="match status" value="1"/>
</dbReference>
<dbReference type="HAMAP" id="MF_01007">
    <property type="entry name" value="16SrRNA_methyltr_H"/>
    <property type="match status" value="1"/>
</dbReference>
<dbReference type="InterPro" id="IPR002903">
    <property type="entry name" value="RsmH"/>
</dbReference>
<dbReference type="InterPro" id="IPR023397">
    <property type="entry name" value="SAM-dep_MeTrfase_MraW_recog"/>
</dbReference>
<dbReference type="InterPro" id="IPR029063">
    <property type="entry name" value="SAM-dependent_MTases_sf"/>
</dbReference>
<dbReference type="NCBIfam" id="TIGR00006">
    <property type="entry name" value="16S rRNA (cytosine(1402)-N(4))-methyltransferase RsmH"/>
    <property type="match status" value="1"/>
</dbReference>
<dbReference type="PANTHER" id="PTHR11265:SF0">
    <property type="entry name" value="12S RRNA N4-METHYLCYTIDINE METHYLTRANSFERASE"/>
    <property type="match status" value="1"/>
</dbReference>
<dbReference type="PANTHER" id="PTHR11265">
    <property type="entry name" value="S-ADENOSYL-METHYLTRANSFERASE MRAW"/>
    <property type="match status" value="1"/>
</dbReference>
<dbReference type="Pfam" id="PF01795">
    <property type="entry name" value="Methyltransf_5"/>
    <property type="match status" value="1"/>
</dbReference>
<dbReference type="PIRSF" id="PIRSF004486">
    <property type="entry name" value="MraW"/>
    <property type="match status" value="1"/>
</dbReference>
<dbReference type="SUPFAM" id="SSF81799">
    <property type="entry name" value="Putative methyltransferase TM0872, insert domain"/>
    <property type="match status" value="1"/>
</dbReference>
<dbReference type="SUPFAM" id="SSF53335">
    <property type="entry name" value="S-adenosyl-L-methionine-dependent methyltransferases"/>
    <property type="match status" value="1"/>
</dbReference>
<keyword id="KW-0963">Cytoplasm</keyword>
<keyword id="KW-0489">Methyltransferase</keyword>
<keyword id="KW-0698">rRNA processing</keyword>
<keyword id="KW-0949">S-adenosyl-L-methionine</keyword>
<keyword id="KW-0808">Transferase</keyword>
<gene>
    <name evidence="1" type="primary">rsmH</name>
    <name type="synonym">mraW</name>
    <name type="ordered locus">CBUD_1991</name>
</gene>
<reference key="1">
    <citation type="journal article" date="2009" name="Infect. Immun.">
        <title>Comparative genomics reveal extensive transposon-mediated genomic plasticity and diversity among potential effector proteins within the genus Coxiella.</title>
        <authorList>
            <person name="Beare P.A."/>
            <person name="Unsworth N."/>
            <person name="Andoh M."/>
            <person name="Voth D.E."/>
            <person name="Omsland A."/>
            <person name="Gilk S.D."/>
            <person name="Williams K.P."/>
            <person name="Sobral B.W."/>
            <person name="Kupko J.J. III"/>
            <person name="Porcella S.F."/>
            <person name="Samuel J.E."/>
            <person name="Heinzen R.A."/>
        </authorList>
    </citation>
    <scope>NUCLEOTIDE SEQUENCE [LARGE SCALE GENOMIC DNA]</scope>
    <source>
        <strain>Dugway 5J108-111</strain>
    </source>
</reference>
<protein>
    <recommendedName>
        <fullName evidence="1">Ribosomal RNA small subunit methyltransferase H</fullName>
        <ecNumber evidence="1">2.1.1.199</ecNumber>
    </recommendedName>
    <alternativeName>
        <fullName evidence="1">16S rRNA m(4)C1402 methyltransferase</fullName>
    </alternativeName>
    <alternativeName>
        <fullName evidence="1">rRNA (cytosine-N(4)-)-methyltransferase RsmH</fullName>
    </alternativeName>
</protein>
<evidence type="ECO:0000255" key="1">
    <source>
        <dbReference type="HAMAP-Rule" id="MF_01007"/>
    </source>
</evidence>
<accession>A9KET2</accession>
<feature type="chain" id="PRO_0000386833" description="Ribosomal RNA small subunit methyltransferase H">
    <location>
        <begin position="1"/>
        <end position="307"/>
    </location>
</feature>
<feature type="binding site" evidence="1">
    <location>
        <begin position="32"/>
        <end position="34"/>
    </location>
    <ligand>
        <name>S-adenosyl-L-methionine</name>
        <dbReference type="ChEBI" id="CHEBI:59789"/>
    </ligand>
</feature>
<feature type="binding site" evidence="1">
    <location>
        <position position="52"/>
    </location>
    <ligand>
        <name>S-adenosyl-L-methionine</name>
        <dbReference type="ChEBI" id="CHEBI:59789"/>
    </ligand>
</feature>
<feature type="binding site" evidence="1">
    <location>
        <position position="78"/>
    </location>
    <ligand>
        <name>S-adenosyl-L-methionine</name>
        <dbReference type="ChEBI" id="CHEBI:59789"/>
    </ligand>
</feature>
<feature type="binding site" evidence="1">
    <location>
        <position position="100"/>
    </location>
    <ligand>
        <name>S-adenosyl-L-methionine</name>
        <dbReference type="ChEBI" id="CHEBI:59789"/>
    </ligand>
</feature>
<feature type="binding site" evidence="1">
    <location>
        <position position="107"/>
    </location>
    <ligand>
        <name>S-adenosyl-L-methionine</name>
        <dbReference type="ChEBI" id="CHEBI:59789"/>
    </ligand>
</feature>
<sequence length="307" mass="34922">MEAHKPVLFDEVMEGLAIRPDGIYVDGTFGRGGHSFGILQRLGPNGRLMAMDKDPDAVAVANKALFEDARFSIVHETFANLQKAVRDRGWEGKVNGILLDIGVSSPQLEDAKRGFSFSKDGPLDMRMNPKQSMDAASWINQAAMEDIRRVLWNYGEERFAKRIAQAIVNAREEKPITRTQELSDIVIKAYPQRKIKKHPATRTFQAIRIFINRELDELRECLPQCLETLAVGGRLCVISFHSLEDRLVKRFIQKESRDHLPREIPILAKDIKHRLKPLGSLIRPTEAEIKKNPRARSARLRIVEKLS</sequence>
<proteinExistence type="inferred from homology"/>
<name>RSMH_COXBN</name>